<organism>
    <name type="scientific">Haemophilus influenzae (strain ATCC 51907 / DSM 11121 / KW20 / Rd)</name>
    <dbReference type="NCBI Taxonomy" id="71421"/>
    <lineage>
        <taxon>Bacteria</taxon>
        <taxon>Pseudomonadati</taxon>
        <taxon>Pseudomonadota</taxon>
        <taxon>Gammaproteobacteria</taxon>
        <taxon>Pasteurellales</taxon>
        <taxon>Pasteurellaceae</taxon>
        <taxon>Haemophilus</taxon>
    </lineage>
</organism>
<evidence type="ECO:0000255" key="1">
    <source>
        <dbReference type="PROSITE-ProRule" id="PRU00434"/>
    </source>
</evidence>
<evidence type="ECO:0000255" key="2">
    <source>
        <dbReference type="PROSITE-ProRule" id="PRU00441"/>
    </source>
</evidence>
<evidence type="ECO:0000305" key="3"/>
<reference key="1">
    <citation type="journal article" date="1995" name="Science">
        <title>Whole-genome random sequencing and assembly of Haemophilus influenzae Rd.</title>
        <authorList>
            <person name="Fleischmann R.D."/>
            <person name="Adams M.D."/>
            <person name="White O."/>
            <person name="Clayton R.A."/>
            <person name="Kirkness E.F."/>
            <person name="Kerlavage A.R."/>
            <person name="Bult C.J."/>
            <person name="Tomb J.-F."/>
            <person name="Dougherty B.A."/>
            <person name="Merrick J.M."/>
            <person name="McKenney K."/>
            <person name="Sutton G.G."/>
            <person name="FitzHugh W."/>
            <person name="Fields C.A."/>
            <person name="Gocayne J.D."/>
            <person name="Scott J.D."/>
            <person name="Shirley R."/>
            <person name="Liu L.-I."/>
            <person name="Glodek A."/>
            <person name="Kelley J.M."/>
            <person name="Weidman J.F."/>
            <person name="Phillips C.A."/>
            <person name="Spriggs T."/>
            <person name="Hedblom E."/>
            <person name="Cotton M.D."/>
            <person name="Utterback T.R."/>
            <person name="Hanna M.C."/>
            <person name="Nguyen D.T."/>
            <person name="Saudek D.M."/>
            <person name="Brandon R.C."/>
            <person name="Fine L.D."/>
            <person name="Fritchman J.L."/>
            <person name="Fuhrmann J.L."/>
            <person name="Geoghagen N.S.M."/>
            <person name="Gnehm C.L."/>
            <person name="McDonald L.A."/>
            <person name="Small K.V."/>
            <person name="Fraser C.M."/>
            <person name="Smith H.O."/>
            <person name="Venter J.C."/>
        </authorList>
    </citation>
    <scope>NUCLEOTIDE SEQUENCE [LARGE SCALE GENOMIC DNA]</scope>
    <source>
        <strain>ATCC 51907 / DSM 11121 / KW20 / Rd</strain>
    </source>
</reference>
<reference key="2">
    <citation type="journal article" date="2000" name="Electrophoresis">
        <title>Two-dimensional map of the proteome of Haemophilus influenzae.</title>
        <authorList>
            <person name="Langen H."/>
            <person name="Takacs B."/>
            <person name="Evers S."/>
            <person name="Berndt P."/>
            <person name="Lahm H.W."/>
            <person name="Wipf B."/>
            <person name="Gray C."/>
            <person name="Fountoulakis M."/>
        </authorList>
    </citation>
    <scope>IDENTIFICATION BY MASS SPECTROMETRY</scope>
    <source>
        <strain>ATCC 51907 / DSM 11121 / KW20 / Rd</strain>
    </source>
</reference>
<comment type="subcellular location">
    <subcellularLocation>
        <location evidence="3">Cell inner membrane</location>
        <topology evidence="2">Multi-pass membrane protein</topology>
    </subcellularLocation>
</comment>
<comment type="similarity">
    <text evidence="3">Belongs to the ABC transporter superfamily. Lipid exporter (TC 3.A.1.106) family.</text>
</comment>
<protein>
    <recommendedName>
        <fullName>Probable ABC transporter ATP-binding/permease protein HI_0664</fullName>
    </recommendedName>
</protein>
<proteinExistence type="evidence at protein level"/>
<feature type="chain" id="PRO_0000093202" description="Probable ABC transporter ATP-binding/permease protein HI_0664">
    <location>
        <begin position="1"/>
        <end position="552"/>
    </location>
</feature>
<feature type="transmembrane region" description="Helical" evidence="2">
    <location>
        <begin position="22"/>
        <end position="42"/>
    </location>
</feature>
<feature type="transmembrane region" description="Helical" evidence="2">
    <location>
        <begin position="52"/>
        <end position="72"/>
    </location>
</feature>
<feature type="transmembrane region" description="Helical" evidence="2">
    <location>
        <begin position="139"/>
        <end position="159"/>
    </location>
</feature>
<feature type="transmembrane region" description="Helical" evidence="2">
    <location>
        <begin position="162"/>
        <end position="182"/>
    </location>
</feature>
<feature type="transmembrane region" description="Helical" evidence="2">
    <location>
        <begin position="253"/>
        <end position="273"/>
    </location>
</feature>
<feature type="transmembrane region" description="Helical" evidence="2">
    <location>
        <begin position="278"/>
        <end position="298"/>
    </location>
</feature>
<feature type="domain" description="ABC transmembrane type-1" evidence="2">
    <location>
        <begin position="23"/>
        <end position="307"/>
    </location>
</feature>
<feature type="domain" description="ABC transporter" evidence="1">
    <location>
        <begin position="340"/>
        <end position="552"/>
    </location>
</feature>
<feature type="binding site" evidence="1">
    <location>
        <begin position="372"/>
        <end position="379"/>
    </location>
    <ligand>
        <name>ATP</name>
        <dbReference type="ChEBI" id="CHEBI:30616"/>
    </ligand>
</feature>
<keyword id="KW-0067">ATP-binding</keyword>
<keyword id="KW-0997">Cell inner membrane</keyword>
<keyword id="KW-1003">Cell membrane</keyword>
<keyword id="KW-0472">Membrane</keyword>
<keyword id="KW-0547">Nucleotide-binding</keyword>
<keyword id="KW-1185">Reference proteome</keyword>
<keyword id="KW-0812">Transmembrane</keyword>
<keyword id="KW-1133">Transmembrane helix</keyword>
<keyword id="KW-0813">Transport</keyword>
<gene>
    <name type="ordered locus">HI_0664</name>
</gene>
<name>Y664_HAEIN</name>
<sequence length="552" mass="61294">MRKNGFVVMGHLLKLVTPLAHIMAFTITMGTLGFLAAIFIMVLGATGLVNLLNFDTHLSFSGILTALIVLAVARGALRYLEQMSGHYIAFKLLALLRDKVFSSLRRLAFVKLQDKQAGQLVSLVTNDIELLEVFYAHTIAPIMIAFFTSAILLLVFAQLSSWFVLVALAAYLTVGVILPIITTKLAREDGRRYRELVGEMNDFFLDSVRGMKEIQLFGYAKQRLDEIQQRSQKIDTAFERIKDQEAKVRVYTEVAVSVFNIIMLFTGLILFSLDKIDFAAFLIGVILLMSSYGPVIALSNLSSNLLQTLASGERVLSLLAEEPELKDVESAVDLKDVSRIDVENVNFAYGEEQILSDVSLSVKKGEILGIHGRSGSGKSTLLKLLMRFYDPKSGSIKINGETLPNINTCSLRDNMAYITQQTYIFNETIEENIRLARRDATLEEIMEAAKKASIHDFILSLPQGYQTKMTELGGNLSDGEKQRIGIARAFLHNAPIILLDEPTSNLDSLNEAMILKSLLNVKAEKLIILVSHRQSTMAICDQVIGIENGRMS</sequence>
<accession>Q57538</accession>
<dbReference type="EMBL" id="L42023">
    <property type="protein sequence ID" value="AAC22321.1"/>
    <property type="molecule type" value="Genomic_DNA"/>
</dbReference>
<dbReference type="PIR" id="A64085">
    <property type="entry name" value="A64085"/>
</dbReference>
<dbReference type="RefSeq" id="NP_438823.1">
    <property type="nucleotide sequence ID" value="NC_000907.1"/>
</dbReference>
<dbReference type="SMR" id="Q57538"/>
<dbReference type="STRING" id="71421.HI_0664"/>
<dbReference type="EnsemblBacteria" id="AAC22321">
    <property type="protein sequence ID" value="AAC22321"/>
    <property type="gene ID" value="HI_0664"/>
</dbReference>
<dbReference type="KEGG" id="hin:HI_0664"/>
<dbReference type="PATRIC" id="fig|71421.8.peg.693"/>
<dbReference type="eggNOG" id="COG1132">
    <property type="taxonomic scope" value="Bacteria"/>
</dbReference>
<dbReference type="HOGENOM" id="CLU_000604_84_9_6"/>
<dbReference type="OrthoDB" id="9806127at2"/>
<dbReference type="PhylomeDB" id="Q57538"/>
<dbReference type="BioCyc" id="HINF71421:G1GJ1-698-MONOMER"/>
<dbReference type="Proteomes" id="UP000000579">
    <property type="component" value="Chromosome"/>
</dbReference>
<dbReference type="GO" id="GO:0005886">
    <property type="term" value="C:plasma membrane"/>
    <property type="evidence" value="ECO:0000318"/>
    <property type="project" value="GO_Central"/>
</dbReference>
<dbReference type="GO" id="GO:0140359">
    <property type="term" value="F:ABC-type transporter activity"/>
    <property type="evidence" value="ECO:0007669"/>
    <property type="project" value="InterPro"/>
</dbReference>
<dbReference type="GO" id="GO:0005524">
    <property type="term" value="F:ATP binding"/>
    <property type="evidence" value="ECO:0007669"/>
    <property type="project" value="UniProtKB-KW"/>
</dbReference>
<dbReference type="GO" id="GO:0016887">
    <property type="term" value="F:ATP hydrolysis activity"/>
    <property type="evidence" value="ECO:0007669"/>
    <property type="project" value="InterPro"/>
</dbReference>
<dbReference type="GO" id="GO:0042626">
    <property type="term" value="F:ATPase-coupled transmembrane transporter activity"/>
    <property type="evidence" value="ECO:0000318"/>
    <property type="project" value="GO_Central"/>
</dbReference>
<dbReference type="GO" id="GO:0045454">
    <property type="term" value="P:cell redox homeostasis"/>
    <property type="evidence" value="ECO:0007669"/>
    <property type="project" value="InterPro"/>
</dbReference>
<dbReference type="GO" id="GO:0034775">
    <property type="term" value="P:glutathione transmembrane transport"/>
    <property type="evidence" value="ECO:0007669"/>
    <property type="project" value="InterPro"/>
</dbReference>
<dbReference type="FunFam" id="3.40.50.300:FF:001444">
    <property type="entry name" value="ABC transporter ATP-binding protein"/>
    <property type="match status" value="1"/>
</dbReference>
<dbReference type="FunFam" id="1.20.1560.10:FF:000381">
    <property type="entry name" value="Probable ABC transporter ATP-binding/permease protein HI_0664"/>
    <property type="match status" value="1"/>
</dbReference>
<dbReference type="Gene3D" id="1.20.1560.10">
    <property type="entry name" value="ABC transporter type 1, transmembrane domain"/>
    <property type="match status" value="1"/>
</dbReference>
<dbReference type="Gene3D" id="3.40.50.300">
    <property type="entry name" value="P-loop containing nucleotide triphosphate hydrolases"/>
    <property type="match status" value="1"/>
</dbReference>
<dbReference type="InterPro" id="IPR003593">
    <property type="entry name" value="AAA+_ATPase"/>
</dbReference>
<dbReference type="InterPro" id="IPR011527">
    <property type="entry name" value="ABC1_TM_dom"/>
</dbReference>
<dbReference type="InterPro" id="IPR036640">
    <property type="entry name" value="ABC1_TM_sf"/>
</dbReference>
<dbReference type="InterPro" id="IPR014223">
    <property type="entry name" value="ABC_CydC/D"/>
</dbReference>
<dbReference type="InterPro" id="IPR003439">
    <property type="entry name" value="ABC_transporter-like_ATP-bd"/>
</dbReference>
<dbReference type="InterPro" id="IPR027417">
    <property type="entry name" value="P-loop_NTPase"/>
</dbReference>
<dbReference type="InterPro" id="IPR039421">
    <property type="entry name" value="Type_1_exporter"/>
</dbReference>
<dbReference type="NCBIfam" id="TIGR02868">
    <property type="entry name" value="CydC"/>
    <property type="match status" value="1"/>
</dbReference>
<dbReference type="PANTHER" id="PTHR24221">
    <property type="entry name" value="ATP-BINDING CASSETTE SUB-FAMILY B"/>
    <property type="match status" value="1"/>
</dbReference>
<dbReference type="PANTHER" id="PTHR24221:SF653">
    <property type="entry name" value="TRANSPORT ATP-BINDING PROTEIN CYDC"/>
    <property type="match status" value="1"/>
</dbReference>
<dbReference type="Pfam" id="PF00664">
    <property type="entry name" value="ABC_membrane"/>
    <property type="match status" value="1"/>
</dbReference>
<dbReference type="Pfam" id="PF00005">
    <property type="entry name" value="ABC_tran"/>
    <property type="match status" value="1"/>
</dbReference>
<dbReference type="SMART" id="SM00382">
    <property type="entry name" value="AAA"/>
    <property type="match status" value="1"/>
</dbReference>
<dbReference type="SUPFAM" id="SSF90123">
    <property type="entry name" value="ABC transporter transmembrane region"/>
    <property type="match status" value="1"/>
</dbReference>
<dbReference type="SUPFAM" id="SSF52540">
    <property type="entry name" value="P-loop containing nucleoside triphosphate hydrolases"/>
    <property type="match status" value="1"/>
</dbReference>
<dbReference type="PROSITE" id="PS50929">
    <property type="entry name" value="ABC_TM1F"/>
    <property type="match status" value="1"/>
</dbReference>
<dbReference type="PROSITE" id="PS50893">
    <property type="entry name" value="ABC_TRANSPORTER_2"/>
    <property type="match status" value="1"/>
</dbReference>